<evidence type="ECO:0000255" key="1">
    <source>
        <dbReference type="HAMAP-Rule" id="MF_01569"/>
    </source>
</evidence>
<gene>
    <name evidence="1" type="primary">proS</name>
    <name type="ordered locus">THEYE_A1047</name>
</gene>
<feature type="chain" id="PRO_1000199435" description="Proline--tRNA ligase">
    <location>
        <begin position="1"/>
        <end position="571"/>
    </location>
</feature>
<protein>
    <recommendedName>
        <fullName evidence="1">Proline--tRNA ligase</fullName>
        <ecNumber evidence="1">6.1.1.15</ecNumber>
    </recommendedName>
    <alternativeName>
        <fullName evidence="1">Prolyl-tRNA synthetase</fullName>
        <shortName evidence="1">ProRS</shortName>
    </alternativeName>
</protein>
<sequence>MRYSKLFIPTMREIPSGINAISHILMLKAGYVRQLAAGLFIFLPLGWRVLNKINMILKEEMERIGAQEISMPILHPAEIWQETGRWYTIKEEMFRLKDRTGRDMCLGMTHEEIMTWIASKEIKSYRQLPQIWYQIQTKLRDEARPRGGVLRTREFIMKDSYSFDIDWEGLDKSYNLHAEAYHRIFTKCGLKYYQVESDPGIMGDMESHEFMAPTPAGEDEIVLCDSCGYSANIEVAKSELPTLPSLNFEYKEIYTPEKKSVKEVSDFLGLSEKYFIKTLIVISEKNGPVLVMLRGDQELNEKKLARIIGEFSFATSEQALEILGVELGFVGPVGHKIKKIADFSIQKEISYISGANKKNYHLQGIIPGIHFDAQWADIRRVKEEDRCPKCGNSLKIEKAIEVGNIFKLGTKYTEPLHAYFLDKDGKEKPIIMGSYGIGPARVAAAAIEQNHDSDGIIWPKSISPFDIEIIPLNMDDEKTVSIAEELYEKVTEIYNSFADRHMEVLIDDRDERPGVKFKDADLIGIPIQIVIGKKGLKENKVEIKKRRTKETKKVSVNKAVVEIVNSYYETY</sequence>
<reference key="1">
    <citation type="submission" date="2008-08" db="EMBL/GenBank/DDBJ databases">
        <title>The complete genome sequence of Thermodesulfovibrio yellowstonii strain ATCC 51303 / DSM 11347 / YP87.</title>
        <authorList>
            <person name="Dodson R.J."/>
            <person name="Durkin A.S."/>
            <person name="Wu M."/>
            <person name="Eisen J."/>
            <person name="Sutton G."/>
        </authorList>
    </citation>
    <scope>NUCLEOTIDE SEQUENCE [LARGE SCALE GENOMIC DNA]</scope>
    <source>
        <strain>ATCC 51303 / DSM 11347 / YP87</strain>
    </source>
</reference>
<accession>B5YKW0</accession>
<organism>
    <name type="scientific">Thermodesulfovibrio yellowstonii (strain ATCC 51303 / DSM 11347 / YP87)</name>
    <dbReference type="NCBI Taxonomy" id="289376"/>
    <lineage>
        <taxon>Bacteria</taxon>
        <taxon>Pseudomonadati</taxon>
        <taxon>Nitrospirota</taxon>
        <taxon>Thermodesulfovibrionia</taxon>
        <taxon>Thermodesulfovibrionales</taxon>
        <taxon>Thermodesulfovibrionaceae</taxon>
        <taxon>Thermodesulfovibrio</taxon>
    </lineage>
</organism>
<name>SYP_THEYD</name>
<dbReference type="EC" id="6.1.1.15" evidence="1"/>
<dbReference type="EMBL" id="CP001147">
    <property type="protein sequence ID" value="ACI20357.1"/>
    <property type="molecule type" value="Genomic_DNA"/>
</dbReference>
<dbReference type="RefSeq" id="WP_012545094.1">
    <property type="nucleotide sequence ID" value="NC_011296.1"/>
</dbReference>
<dbReference type="RefSeq" id="YP_002248875.1">
    <property type="nucleotide sequence ID" value="NC_011296.1"/>
</dbReference>
<dbReference type="SMR" id="B5YKW0"/>
<dbReference type="FunCoup" id="B5YKW0">
    <property type="interactions" value="435"/>
</dbReference>
<dbReference type="STRING" id="289376.THEYE_A1047"/>
<dbReference type="EnsemblBacteria" id="ACI20357">
    <property type="protein sequence ID" value="ACI20357"/>
    <property type="gene ID" value="THEYE_A1047"/>
</dbReference>
<dbReference type="KEGG" id="tye:THEYE_A1047"/>
<dbReference type="PATRIC" id="fig|289376.4.peg.1027"/>
<dbReference type="eggNOG" id="COG0442">
    <property type="taxonomic scope" value="Bacteria"/>
</dbReference>
<dbReference type="HOGENOM" id="CLU_016739_0_0_0"/>
<dbReference type="InParanoid" id="B5YKW0"/>
<dbReference type="OrthoDB" id="9809052at2"/>
<dbReference type="Proteomes" id="UP000000718">
    <property type="component" value="Chromosome"/>
</dbReference>
<dbReference type="GO" id="GO:0005829">
    <property type="term" value="C:cytosol"/>
    <property type="evidence" value="ECO:0000318"/>
    <property type="project" value="GO_Central"/>
</dbReference>
<dbReference type="GO" id="GO:0002161">
    <property type="term" value="F:aminoacyl-tRNA deacylase activity"/>
    <property type="evidence" value="ECO:0007669"/>
    <property type="project" value="InterPro"/>
</dbReference>
<dbReference type="GO" id="GO:0005524">
    <property type="term" value="F:ATP binding"/>
    <property type="evidence" value="ECO:0007669"/>
    <property type="project" value="UniProtKB-UniRule"/>
</dbReference>
<dbReference type="GO" id="GO:0004827">
    <property type="term" value="F:proline-tRNA ligase activity"/>
    <property type="evidence" value="ECO:0000318"/>
    <property type="project" value="GO_Central"/>
</dbReference>
<dbReference type="GO" id="GO:0006433">
    <property type="term" value="P:prolyl-tRNA aminoacylation"/>
    <property type="evidence" value="ECO:0000318"/>
    <property type="project" value="GO_Central"/>
</dbReference>
<dbReference type="CDD" id="cd04334">
    <property type="entry name" value="ProRS-INS"/>
    <property type="match status" value="1"/>
</dbReference>
<dbReference type="CDD" id="cd00861">
    <property type="entry name" value="ProRS_anticodon_short"/>
    <property type="match status" value="1"/>
</dbReference>
<dbReference type="CDD" id="cd00779">
    <property type="entry name" value="ProRS_core_prok"/>
    <property type="match status" value="1"/>
</dbReference>
<dbReference type="FunFam" id="3.30.930.10:FF:000070">
    <property type="entry name" value="Proline--tRNA ligase"/>
    <property type="match status" value="1"/>
</dbReference>
<dbReference type="FunFam" id="3.30.930.10:FF:000097">
    <property type="entry name" value="Proline--tRNA ligase"/>
    <property type="match status" value="1"/>
</dbReference>
<dbReference type="FunFam" id="3.40.50.800:FF:000011">
    <property type="entry name" value="Proline--tRNA ligase"/>
    <property type="match status" value="1"/>
</dbReference>
<dbReference type="Gene3D" id="3.40.50.800">
    <property type="entry name" value="Anticodon-binding domain"/>
    <property type="match status" value="1"/>
</dbReference>
<dbReference type="Gene3D" id="3.30.930.10">
    <property type="entry name" value="Bira Bifunctional Protein, Domain 2"/>
    <property type="match status" value="2"/>
</dbReference>
<dbReference type="HAMAP" id="MF_01569">
    <property type="entry name" value="Pro_tRNA_synth_type1"/>
    <property type="match status" value="1"/>
</dbReference>
<dbReference type="InterPro" id="IPR002314">
    <property type="entry name" value="aa-tRNA-synt_IIb"/>
</dbReference>
<dbReference type="InterPro" id="IPR006195">
    <property type="entry name" value="aa-tRNA-synth_II"/>
</dbReference>
<dbReference type="InterPro" id="IPR045864">
    <property type="entry name" value="aa-tRNA-synth_II/BPL/LPL"/>
</dbReference>
<dbReference type="InterPro" id="IPR004154">
    <property type="entry name" value="Anticodon-bd"/>
</dbReference>
<dbReference type="InterPro" id="IPR036621">
    <property type="entry name" value="Anticodon-bd_dom_sf"/>
</dbReference>
<dbReference type="InterPro" id="IPR002316">
    <property type="entry name" value="Pro-tRNA-ligase_IIa"/>
</dbReference>
<dbReference type="InterPro" id="IPR004500">
    <property type="entry name" value="Pro-tRNA-synth_IIa_bac-type"/>
</dbReference>
<dbReference type="InterPro" id="IPR023717">
    <property type="entry name" value="Pro-tRNA-Synthase_IIa_type1"/>
</dbReference>
<dbReference type="InterPro" id="IPR050062">
    <property type="entry name" value="Pro-tRNA_synthetase"/>
</dbReference>
<dbReference type="InterPro" id="IPR044140">
    <property type="entry name" value="ProRS_anticodon_short"/>
</dbReference>
<dbReference type="InterPro" id="IPR033730">
    <property type="entry name" value="ProRS_core_prok"/>
</dbReference>
<dbReference type="InterPro" id="IPR036754">
    <property type="entry name" value="YbaK/aa-tRNA-synt-asso_dom_sf"/>
</dbReference>
<dbReference type="InterPro" id="IPR007214">
    <property type="entry name" value="YbaK/aa-tRNA-synth-assoc-dom"/>
</dbReference>
<dbReference type="NCBIfam" id="NF006625">
    <property type="entry name" value="PRK09194.1"/>
    <property type="match status" value="1"/>
</dbReference>
<dbReference type="NCBIfam" id="TIGR00409">
    <property type="entry name" value="proS_fam_II"/>
    <property type="match status" value="1"/>
</dbReference>
<dbReference type="PANTHER" id="PTHR42753">
    <property type="entry name" value="MITOCHONDRIAL RIBOSOME PROTEIN L39/PROLYL-TRNA LIGASE FAMILY MEMBER"/>
    <property type="match status" value="1"/>
</dbReference>
<dbReference type="PANTHER" id="PTHR42753:SF2">
    <property type="entry name" value="PROLINE--TRNA LIGASE"/>
    <property type="match status" value="1"/>
</dbReference>
<dbReference type="Pfam" id="PF03129">
    <property type="entry name" value="HGTP_anticodon"/>
    <property type="match status" value="1"/>
</dbReference>
<dbReference type="Pfam" id="PF00587">
    <property type="entry name" value="tRNA-synt_2b"/>
    <property type="match status" value="1"/>
</dbReference>
<dbReference type="Pfam" id="PF04073">
    <property type="entry name" value="tRNA_edit"/>
    <property type="match status" value="1"/>
</dbReference>
<dbReference type="PRINTS" id="PR01046">
    <property type="entry name" value="TRNASYNTHPRO"/>
</dbReference>
<dbReference type="SUPFAM" id="SSF52954">
    <property type="entry name" value="Class II aaRS ABD-related"/>
    <property type="match status" value="1"/>
</dbReference>
<dbReference type="SUPFAM" id="SSF55681">
    <property type="entry name" value="Class II aaRS and biotin synthetases"/>
    <property type="match status" value="1"/>
</dbReference>
<dbReference type="SUPFAM" id="SSF55826">
    <property type="entry name" value="YbaK/ProRS associated domain"/>
    <property type="match status" value="1"/>
</dbReference>
<dbReference type="PROSITE" id="PS50862">
    <property type="entry name" value="AA_TRNA_LIGASE_II"/>
    <property type="match status" value="1"/>
</dbReference>
<comment type="function">
    <text evidence="1">Catalyzes the attachment of proline to tRNA(Pro) in a two-step reaction: proline is first activated by ATP to form Pro-AMP and then transferred to the acceptor end of tRNA(Pro). As ProRS can inadvertently accommodate and process non-cognate amino acids such as alanine and cysteine, to avoid such errors it has two additional distinct editing activities against alanine. One activity is designated as 'pretransfer' editing and involves the tRNA(Pro)-independent hydrolysis of activated Ala-AMP. The other activity is designated 'posttransfer' editing and involves deacylation of mischarged Ala-tRNA(Pro). The misacylated Cys-tRNA(Pro) is not edited by ProRS.</text>
</comment>
<comment type="catalytic activity">
    <reaction evidence="1">
        <text>tRNA(Pro) + L-proline + ATP = L-prolyl-tRNA(Pro) + AMP + diphosphate</text>
        <dbReference type="Rhea" id="RHEA:14305"/>
        <dbReference type="Rhea" id="RHEA-COMP:9700"/>
        <dbReference type="Rhea" id="RHEA-COMP:9702"/>
        <dbReference type="ChEBI" id="CHEBI:30616"/>
        <dbReference type="ChEBI" id="CHEBI:33019"/>
        <dbReference type="ChEBI" id="CHEBI:60039"/>
        <dbReference type="ChEBI" id="CHEBI:78442"/>
        <dbReference type="ChEBI" id="CHEBI:78532"/>
        <dbReference type="ChEBI" id="CHEBI:456215"/>
        <dbReference type="EC" id="6.1.1.15"/>
    </reaction>
</comment>
<comment type="subunit">
    <text evidence="1">Homodimer.</text>
</comment>
<comment type="subcellular location">
    <subcellularLocation>
        <location evidence="1">Cytoplasm</location>
    </subcellularLocation>
</comment>
<comment type="domain">
    <text evidence="1">Consists of three domains: the N-terminal catalytic domain, the editing domain and the C-terminal anticodon-binding domain.</text>
</comment>
<comment type="similarity">
    <text evidence="1">Belongs to the class-II aminoacyl-tRNA synthetase family. ProS type 1 subfamily.</text>
</comment>
<proteinExistence type="inferred from homology"/>
<keyword id="KW-0030">Aminoacyl-tRNA synthetase</keyword>
<keyword id="KW-0067">ATP-binding</keyword>
<keyword id="KW-0963">Cytoplasm</keyword>
<keyword id="KW-0436">Ligase</keyword>
<keyword id="KW-0547">Nucleotide-binding</keyword>
<keyword id="KW-0648">Protein biosynthesis</keyword>
<keyword id="KW-1185">Reference proteome</keyword>